<evidence type="ECO:0000250" key="1"/>
<evidence type="ECO:0000256" key="2">
    <source>
        <dbReference type="SAM" id="MobiDB-lite"/>
    </source>
</evidence>
<evidence type="ECO:0000305" key="3"/>
<accession>P9WMN9</accession>
<accession>L0T413</accession>
<accession>O06390</accession>
<accession>P63506</accession>
<reference key="1">
    <citation type="journal article" date="1998" name="Nature">
        <title>Deciphering the biology of Mycobacterium tuberculosis from the complete genome sequence.</title>
        <authorList>
            <person name="Cole S.T."/>
            <person name="Brosch R."/>
            <person name="Parkhill J."/>
            <person name="Garnier T."/>
            <person name="Churcher C.M."/>
            <person name="Harris D.E."/>
            <person name="Gordon S.V."/>
            <person name="Eiglmeier K."/>
            <person name="Gas S."/>
            <person name="Barry C.E. III"/>
            <person name="Tekaia F."/>
            <person name="Badcock K."/>
            <person name="Basham D."/>
            <person name="Brown D."/>
            <person name="Chillingworth T."/>
            <person name="Connor R."/>
            <person name="Davies R.M."/>
            <person name="Devlin K."/>
            <person name="Feltwell T."/>
            <person name="Gentles S."/>
            <person name="Hamlin N."/>
            <person name="Holroyd S."/>
            <person name="Hornsby T."/>
            <person name="Jagels K."/>
            <person name="Krogh A."/>
            <person name="McLean J."/>
            <person name="Moule S."/>
            <person name="Murphy L.D."/>
            <person name="Oliver S."/>
            <person name="Osborne J."/>
            <person name="Quail M.A."/>
            <person name="Rajandream M.A."/>
            <person name="Rogers J."/>
            <person name="Rutter S."/>
            <person name="Seeger K."/>
            <person name="Skelton S."/>
            <person name="Squares S."/>
            <person name="Squares R."/>
            <person name="Sulston J.E."/>
            <person name="Taylor K."/>
            <person name="Whitehead S."/>
            <person name="Barrell B.G."/>
        </authorList>
    </citation>
    <scope>NUCLEOTIDE SEQUENCE [LARGE SCALE GENOMIC DNA]</scope>
    <source>
        <strain>ATCC 25618 / H37Rv</strain>
    </source>
</reference>
<reference key="2">
    <citation type="journal article" date="2011" name="Mol. Cell. Proteomics">
        <title>Proteogenomic analysis of Mycobacterium tuberculosis by high resolution mass spectrometry.</title>
        <authorList>
            <person name="Kelkar D.S."/>
            <person name="Kumar D."/>
            <person name="Kumar P."/>
            <person name="Balakrishnan L."/>
            <person name="Muthusamy B."/>
            <person name="Yadav A.K."/>
            <person name="Shrivastava P."/>
            <person name="Marimuthu A."/>
            <person name="Anand S."/>
            <person name="Sundaram H."/>
            <person name="Kingsbury R."/>
            <person name="Harsha H.C."/>
            <person name="Nair B."/>
            <person name="Prasad T.S."/>
            <person name="Chauhan D.S."/>
            <person name="Katoch K."/>
            <person name="Katoch V.M."/>
            <person name="Kumar P."/>
            <person name="Chaerkady R."/>
            <person name="Ramachandran S."/>
            <person name="Dash D."/>
            <person name="Pandey A."/>
        </authorList>
    </citation>
    <scope>IDENTIFICATION BY MASS SPECTROMETRY [LARGE SCALE ANALYSIS]</scope>
    <source>
        <strain>ATCC 25618 / H37Rv</strain>
    </source>
</reference>
<protein>
    <recommendedName>
        <fullName>Glutamate-1-semialdehyde 2,1-aminomutase</fullName>
        <shortName>GSA</shortName>
        <ecNumber>5.4.3.8</ecNumber>
    </recommendedName>
    <alternativeName>
        <fullName>Glutamate-1-semialdehyde aminotransferase</fullName>
        <shortName>GSA-AT</shortName>
    </alternativeName>
</protein>
<comment type="catalytic activity">
    <reaction>
        <text>(S)-4-amino-5-oxopentanoate = 5-aminolevulinate</text>
        <dbReference type="Rhea" id="RHEA:14265"/>
        <dbReference type="ChEBI" id="CHEBI:57501"/>
        <dbReference type="ChEBI" id="CHEBI:356416"/>
        <dbReference type="EC" id="5.4.3.8"/>
    </reaction>
</comment>
<comment type="cofactor">
    <cofactor evidence="1">
        <name>pyridoxal 5'-phosphate</name>
        <dbReference type="ChEBI" id="CHEBI:597326"/>
    </cofactor>
</comment>
<comment type="pathway">
    <text>Porphyrin-containing compound metabolism; protoporphyrin-IX biosynthesis; 5-aminolevulinate from L-glutamyl-tRNA(Glu): step 2/2.</text>
</comment>
<comment type="subunit">
    <text evidence="1">Homodimer.</text>
</comment>
<comment type="subcellular location">
    <subcellularLocation>
        <location evidence="3">Cytoplasm</location>
    </subcellularLocation>
</comment>
<comment type="similarity">
    <text evidence="3">Belongs to the class-III pyridoxal-phosphate-dependent aminotransferase family. HemL subfamily.</text>
</comment>
<proteinExistence type="evidence at protein level"/>
<name>GSA_MYCTU</name>
<keyword id="KW-0963">Cytoplasm</keyword>
<keyword id="KW-0413">Isomerase</keyword>
<keyword id="KW-0627">Porphyrin biosynthesis</keyword>
<keyword id="KW-0663">Pyridoxal phosphate</keyword>
<keyword id="KW-1185">Reference proteome</keyword>
<sequence>MGSTEQATSRVRGAARTSAQLFEAACSVIPGGVNSPVRAFTAVGGTPRFITEAHGCWLIDADGNRYVDLVCSWGPMILGHAHPAVVEAVAKAAARGLSFGAPTPAETQLAGEIIGRVAPVERIRLVNSGTEATMSAVRLARGFTGRAKIVKFSGCYHGHVDALLADAGSGVATLGLCDDPQRPASPRSQSSRGLPSSPGVTGAAAADTIVLPYNDIDAVQQTFARFGEQIAAVITEASPGNMGVVPPGPGFNAALRAITAEHGALLILDEVMTGFRVSRSGWYGIDPVPADLFAFGKVMSGGMPAAAFGGRAEVMQRLAPLGPVYQAGTLSGNPVAVAAGLATLRAADDAVYTALDANADRLAGLLSEALTDAVVPHQISRAGNMLSVFFGETPVTDFASARASQTWRYPAFFHAMLDAGVYPPCSAFEAWFVSAALDDAAFGRIANALPAAARAAAQERPA</sequence>
<gene>
    <name type="primary">hemL</name>
    <name type="ordered locus">Rv0524</name>
    <name type="ORF">MTCY25D10.03</name>
</gene>
<organism>
    <name type="scientific">Mycobacterium tuberculosis (strain ATCC 25618 / H37Rv)</name>
    <dbReference type="NCBI Taxonomy" id="83332"/>
    <lineage>
        <taxon>Bacteria</taxon>
        <taxon>Bacillati</taxon>
        <taxon>Actinomycetota</taxon>
        <taxon>Actinomycetes</taxon>
        <taxon>Mycobacteriales</taxon>
        <taxon>Mycobacteriaceae</taxon>
        <taxon>Mycobacterium</taxon>
        <taxon>Mycobacterium tuberculosis complex</taxon>
    </lineage>
</organism>
<feature type="chain" id="PRO_0000120425" description="Glutamate-1-semialdehyde 2,1-aminomutase">
    <location>
        <begin position="1"/>
        <end position="462"/>
    </location>
</feature>
<feature type="region of interest" description="Disordered" evidence="2">
    <location>
        <begin position="178"/>
        <end position="200"/>
    </location>
</feature>
<feature type="compositionally biased region" description="Low complexity" evidence="2">
    <location>
        <begin position="182"/>
        <end position="192"/>
    </location>
</feature>
<feature type="modified residue" description="N6-(pyridoxal phosphate)lysine" evidence="1">
    <location>
        <position position="297"/>
    </location>
</feature>
<dbReference type="EC" id="5.4.3.8"/>
<dbReference type="EMBL" id="AL123456">
    <property type="protein sequence ID" value="CCP43261.1"/>
    <property type="molecule type" value="Genomic_DNA"/>
</dbReference>
<dbReference type="PIR" id="G70544">
    <property type="entry name" value="G70544"/>
</dbReference>
<dbReference type="RefSeq" id="NP_215038.1">
    <property type="nucleotide sequence ID" value="NC_000962.3"/>
</dbReference>
<dbReference type="RefSeq" id="WP_003402844.1">
    <property type="nucleotide sequence ID" value="NZ_NVQJ01000068.1"/>
</dbReference>
<dbReference type="SMR" id="P9WMN9"/>
<dbReference type="FunCoup" id="P9WMN9">
    <property type="interactions" value="366"/>
</dbReference>
<dbReference type="STRING" id="83332.Rv0524"/>
<dbReference type="PaxDb" id="83332-Rv0524"/>
<dbReference type="DNASU" id="887349"/>
<dbReference type="GeneID" id="887349"/>
<dbReference type="KEGG" id="mtu:Rv0524"/>
<dbReference type="KEGG" id="mtv:RVBD_0524"/>
<dbReference type="TubercuList" id="Rv0524"/>
<dbReference type="eggNOG" id="COG0001">
    <property type="taxonomic scope" value="Bacteria"/>
</dbReference>
<dbReference type="InParanoid" id="P9WMN9"/>
<dbReference type="OrthoDB" id="9801052at2"/>
<dbReference type="PhylomeDB" id="P9WMN9"/>
<dbReference type="UniPathway" id="UPA00251">
    <property type="reaction ID" value="UER00317"/>
</dbReference>
<dbReference type="Proteomes" id="UP000001584">
    <property type="component" value="Chromosome"/>
</dbReference>
<dbReference type="GO" id="GO:0005737">
    <property type="term" value="C:cytoplasm"/>
    <property type="evidence" value="ECO:0007669"/>
    <property type="project" value="UniProtKB-SubCell"/>
</dbReference>
<dbReference type="GO" id="GO:0005886">
    <property type="term" value="C:plasma membrane"/>
    <property type="evidence" value="ECO:0007005"/>
    <property type="project" value="MTBBASE"/>
</dbReference>
<dbReference type="GO" id="GO:0042286">
    <property type="term" value="F:glutamate-1-semialdehyde 2,1-aminomutase activity"/>
    <property type="evidence" value="ECO:0007669"/>
    <property type="project" value="UniProtKB-UniRule"/>
</dbReference>
<dbReference type="GO" id="GO:0030170">
    <property type="term" value="F:pyridoxal phosphate binding"/>
    <property type="evidence" value="ECO:0007669"/>
    <property type="project" value="InterPro"/>
</dbReference>
<dbReference type="GO" id="GO:0008483">
    <property type="term" value="F:transaminase activity"/>
    <property type="evidence" value="ECO:0007669"/>
    <property type="project" value="InterPro"/>
</dbReference>
<dbReference type="GO" id="GO:0006782">
    <property type="term" value="P:protoporphyrinogen IX biosynthetic process"/>
    <property type="evidence" value="ECO:0007669"/>
    <property type="project" value="UniProtKB-UniRule"/>
</dbReference>
<dbReference type="CDD" id="cd00610">
    <property type="entry name" value="OAT_like"/>
    <property type="match status" value="1"/>
</dbReference>
<dbReference type="FunFam" id="3.40.640.10:FF:000021">
    <property type="entry name" value="Glutamate-1-semialdehyde 2,1-aminomutase"/>
    <property type="match status" value="1"/>
</dbReference>
<dbReference type="Gene3D" id="3.90.1150.10">
    <property type="entry name" value="Aspartate Aminotransferase, domain 1"/>
    <property type="match status" value="1"/>
</dbReference>
<dbReference type="Gene3D" id="3.40.640.10">
    <property type="entry name" value="Type I PLP-dependent aspartate aminotransferase-like (Major domain)"/>
    <property type="match status" value="1"/>
</dbReference>
<dbReference type="HAMAP" id="MF_00375">
    <property type="entry name" value="HemL_aminotrans_3"/>
    <property type="match status" value="1"/>
</dbReference>
<dbReference type="InterPro" id="IPR004639">
    <property type="entry name" value="4pyrrol_synth_GluAld_NH2Trfase"/>
</dbReference>
<dbReference type="InterPro" id="IPR005814">
    <property type="entry name" value="Aminotrans_3"/>
</dbReference>
<dbReference type="InterPro" id="IPR049704">
    <property type="entry name" value="Aminotrans_3_PPA_site"/>
</dbReference>
<dbReference type="InterPro" id="IPR015424">
    <property type="entry name" value="PyrdxlP-dep_Trfase"/>
</dbReference>
<dbReference type="InterPro" id="IPR015421">
    <property type="entry name" value="PyrdxlP-dep_Trfase_major"/>
</dbReference>
<dbReference type="InterPro" id="IPR015422">
    <property type="entry name" value="PyrdxlP-dep_Trfase_small"/>
</dbReference>
<dbReference type="NCBIfam" id="TIGR00713">
    <property type="entry name" value="hemL"/>
    <property type="match status" value="1"/>
</dbReference>
<dbReference type="NCBIfam" id="NF000818">
    <property type="entry name" value="PRK00062.1"/>
    <property type="match status" value="1"/>
</dbReference>
<dbReference type="PANTHER" id="PTHR43713">
    <property type="entry name" value="GLUTAMATE-1-SEMIALDEHYDE 2,1-AMINOMUTASE"/>
    <property type="match status" value="1"/>
</dbReference>
<dbReference type="PANTHER" id="PTHR43713:SF3">
    <property type="entry name" value="GLUTAMATE-1-SEMIALDEHYDE 2,1-AMINOMUTASE 1, CHLOROPLASTIC-RELATED"/>
    <property type="match status" value="1"/>
</dbReference>
<dbReference type="Pfam" id="PF00202">
    <property type="entry name" value="Aminotran_3"/>
    <property type="match status" value="1"/>
</dbReference>
<dbReference type="SUPFAM" id="SSF53383">
    <property type="entry name" value="PLP-dependent transferases"/>
    <property type="match status" value="1"/>
</dbReference>
<dbReference type="PROSITE" id="PS00600">
    <property type="entry name" value="AA_TRANSFER_CLASS_3"/>
    <property type="match status" value="1"/>
</dbReference>